<keyword id="KW-0067">ATP-binding</keyword>
<keyword id="KW-0997">Cell inner membrane</keyword>
<keyword id="KW-1003">Cell membrane</keyword>
<keyword id="KW-0445">Lipid transport</keyword>
<keyword id="KW-0472">Membrane</keyword>
<keyword id="KW-0547">Nucleotide-binding</keyword>
<keyword id="KW-1185">Reference proteome</keyword>
<keyword id="KW-1278">Translocase</keyword>
<keyword id="KW-0812">Transmembrane</keyword>
<keyword id="KW-1133">Transmembrane helix</keyword>
<keyword id="KW-0813">Transport</keyword>
<gene>
    <name evidence="1" type="primary">msbA</name>
    <name type="ordered locus">SDY_2344</name>
</gene>
<dbReference type="EC" id="7.5.2.6" evidence="1"/>
<dbReference type="EMBL" id="CP000034">
    <property type="protein sequence ID" value="ABB62421.1"/>
    <property type="molecule type" value="Genomic_DNA"/>
</dbReference>
<dbReference type="RefSeq" id="WP_000551270.1">
    <property type="nucleotide sequence ID" value="NC_007606.1"/>
</dbReference>
<dbReference type="RefSeq" id="YP_403912.1">
    <property type="nucleotide sequence ID" value="NC_007606.1"/>
</dbReference>
<dbReference type="SMR" id="Q32E34"/>
<dbReference type="STRING" id="300267.SDY_2344"/>
<dbReference type="CARD" id="ARO:3003950">
    <property type="molecule name" value="msbA"/>
    <property type="mechanism identifier" value="ARO:0010000"/>
    <property type="mechanism name" value="antibiotic efflux"/>
</dbReference>
<dbReference type="EnsemblBacteria" id="ABB62421">
    <property type="protein sequence ID" value="ABB62421"/>
    <property type="gene ID" value="SDY_2344"/>
</dbReference>
<dbReference type="GeneID" id="75205316"/>
<dbReference type="KEGG" id="sdy:SDY_2344"/>
<dbReference type="PATRIC" id="fig|300267.13.peg.2828"/>
<dbReference type="HOGENOM" id="CLU_000604_84_3_6"/>
<dbReference type="Proteomes" id="UP000002716">
    <property type="component" value="Chromosome"/>
</dbReference>
<dbReference type="GO" id="GO:0005886">
    <property type="term" value="C:plasma membrane"/>
    <property type="evidence" value="ECO:0007669"/>
    <property type="project" value="UniProtKB-SubCell"/>
</dbReference>
<dbReference type="GO" id="GO:0015421">
    <property type="term" value="F:ABC-type oligopeptide transporter activity"/>
    <property type="evidence" value="ECO:0007669"/>
    <property type="project" value="TreeGrafter"/>
</dbReference>
<dbReference type="GO" id="GO:0005524">
    <property type="term" value="F:ATP binding"/>
    <property type="evidence" value="ECO:0007669"/>
    <property type="project" value="UniProtKB-KW"/>
</dbReference>
<dbReference type="GO" id="GO:0016887">
    <property type="term" value="F:ATP hydrolysis activity"/>
    <property type="evidence" value="ECO:0007669"/>
    <property type="project" value="InterPro"/>
</dbReference>
<dbReference type="GO" id="GO:0034040">
    <property type="term" value="F:ATPase-coupled lipid transmembrane transporter activity"/>
    <property type="evidence" value="ECO:0007669"/>
    <property type="project" value="InterPro"/>
</dbReference>
<dbReference type="CDD" id="cd18552">
    <property type="entry name" value="ABC_6TM_MsbA_like"/>
    <property type="match status" value="1"/>
</dbReference>
<dbReference type="CDD" id="cd03251">
    <property type="entry name" value="ABCC_MsbA"/>
    <property type="match status" value="1"/>
</dbReference>
<dbReference type="FunFam" id="1.20.1560.10:FF:000008">
    <property type="entry name" value="Lipid A export ATP-binding/permease protein MsbA"/>
    <property type="match status" value="1"/>
</dbReference>
<dbReference type="FunFam" id="3.40.50.300:FF:000140">
    <property type="entry name" value="Lipid A export ATP-binding/permease protein MsbA"/>
    <property type="match status" value="1"/>
</dbReference>
<dbReference type="Gene3D" id="1.20.1560.10">
    <property type="entry name" value="ABC transporter type 1, transmembrane domain"/>
    <property type="match status" value="1"/>
</dbReference>
<dbReference type="Gene3D" id="3.40.50.300">
    <property type="entry name" value="P-loop containing nucleotide triphosphate hydrolases"/>
    <property type="match status" value="1"/>
</dbReference>
<dbReference type="InterPro" id="IPR003593">
    <property type="entry name" value="AAA+_ATPase"/>
</dbReference>
<dbReference type="InterPro" id="IPR011527">
    <property type="entry name" value="ABC1_TM_dom"/>
</dbReference>
<dbReference type="InterPro" id="IPR036640">
    <property type="entry name" value="ABC1_TM_sf"/>
</dbReference>
<dbReference type="InterPro" id="IPR003439">
    <property type="entry name" value="ABC_transporter-like_ATP-bd"/>
</dbReference>
<dbReference type="InterPro" id="IPR017871">
    <property type="entry name" value="ABC_transporter-like_CS"/>
</dbReference>
<dbReference type="InterPro" id="IPR011917">
    <property type="entry name" value="ABC_transpr_lipidA"/>
</dbReference>
<dbReference type="InterPro" id="IPR027417">
    <property type="entry name" value="P-loop_NTPase"/>
</dbReference>
<dbReference type="InterPro" id="IPR039421">
    <property type="entry name" value="Type_1_exporter"/>
</dbReference>
<dbReference type="NCBIfam" id="TIGR02203">
    <property type="entry name" value="MsbA_lipidA"/>
    <property type="match status" value="1"/>
</dbReference>
<dbReference type="NCBIfam" id="NF008381">
    <property type="entry name" value="PRK11176.1"/>
    <property type="match status" value="1"/>
</dbReference>
<dbReference type="PANTHER" id="PTHR43394:SF1">
    <property type="entry name" value="ATP-BINDING CASSETTE SUB-FAMILY B MEMBER 10, MITOCHONDRIAL"/>
    <property type="match status" value="1"/>
</dbReference>
<dbReference type="PANTHER" id="PTHR43394">
    <property type="entry name" value="ATP-DEPENDENT PERMEASE MDL1, MITOCHONDRIAL"/>
    <property type="match status" value="1"/>
</dbReference>
<dbReference type="Pfam" id="PF00664">
    <property type="entry name" value="ABC_membrane"/>
    <property type="match status" value="1"/>
</dbReference>
<dbReference type="Pfam" id="PF00005">
    <property type="entry name" value="ABC_tran"/>
    <property type="match status" value="1"/>
</dbReference>
<dbReference type="SMART" id="SM00382">
    <property type="entry name" value="AAA"/>
    <property type="match status" value="1"/>
</dbReference>
<dbReference type="SUPFAM" id="SSF90123">
    <property type="entry name" value="ABC transporter transmembrane region"/>
    <property type="match status" value="1"/>
</dbReference>
<dbReference type="SUPFAM" id="SSF52540">
    <property type="entry name" value="P-loop containing nucleoside triphosphate hydrolases"/>
    <property type="match status" value="1"/>
</dbReference>
<dbReference type="PROSITE" id="PS50929">
    <property type="entry name" value="ABC_TM1F"/>
    <property type="match status" value="1"/>
</dbReference>
<dbReference type="PROSITE" id="PS00211">
    <property type="entry name" value="ABC_TRANSPORTER_1"/>
    <property type="match status" value="1"/>
</dbReference>
<dbReference type="PROSITE" id="PS50893">
    <property type="entry name" value="ABC_TRANSPORTER_2"/>
    <property type="match status" value="1"/>
</dbReference>
<dbReference type="PROSITE" id="PS51239">
    <property type="entry name" value="MSBA"/>
    <property type="match status" value="1"/>
</dbReference>
<comment type="function">
    <text evidence="1">Involved in lipopolysaccharide (LPS) biosynthesis. Translocates lipid A-core from the inner to the outer leaflet of the inner membrane. Transmembrane domains (TMD) form a pore in the inner membrane and the ATP-binding domain (NBD) is responsible for energy generation.</text>
</comment>
<comment type="catalytic activity">
    <reaction evidence="1">
        <text>ATP + H2O + lipid A-core oligosaccharideSide 1 = ADP + phosphate + lipid A-core oligosaccharideSide 2.</text>
        <dbReference type="EC" id="7.5.2.6"/>
    </reaction>
</comment>
<comment type="subunit">
    <text evidence="1">Homodimer.</text>
</comment>
<comment type="subcellular location">
    <subcellularLocation>
        <location evidence="1">Cell inner membrane</location>
        <topology evidence="1">Multi-pass membrane protein</topology>
    </subcellularLocation>
</comment>
<comment type="domain">
    <text evidence="1">In MsbA the ATP-binding domain (NBD) and the transmembrane domain (TMD) are fused.</text>
</comment>
<comment type="similarity">
    <text evidence="1">Belongs to the ABC transporter superfamily. Lipid exporter (TC 3.A.1.106) family.</text>
</comment>
<protein>
    <recommendedName>
        <fullName evidence="1">ATP-dependent lipid A-core flippase</fullName>
        <ecNumber evidence="1">7.5.2.6</ecNumber>
    </recommendedName>
    <alternativeName>
        <fullName evidence="1">Lipid A export ATP-binding/permease protein MsbA</fullName>
    </alternativeName>
</protein>
<name>MSBA_SHIDS</name>
<evidence type="ECO:0000255" key="1">
    <source>
        <dbReference type="HAMAP-Rule" id="MF_01703"/>
    </source>
</evidence>
<proteinExistence type="inferred from homology"/>
<feature type="chain" id="PRO_0000271657" description="ATP-dependent lipid A-core flippase">
    <location>
        <begin position="1"/>
        <end position="582"/>
    </location>
</feature>
<feature type="transmembrane region" description="Helical" evidence="1">
    <location>
        <begin position="16"/>
        <end position="36"/>
    </location>
</feature>
<feature type="transmembrane region" description="Helical" evidence="1">
    <location>
        <begin position="63"/>
        <end position="83"/>
    </location>
</feature>
<feature type="transmembrane region" description="Helical" evidence="1">
    <location>
        <begin position="153"/>
        <end position="173"/>
    </location>
</feature>
<feature type="transmembrane region" description="Helical" evidence="1">
    <location>
        <begin position="253"/>
        <end position="273"/>
    </location>
</feature>
<feature type="transmembrane region" description="Helical" evidence="1">
    <location>
        <begin position="275"/>
        <end position="295"/>
    </location>
</feature>
<feature type="domain" description="ABC transmembrane type-1" evidence="1">
    <location>
        <begin position="28"/>
        <end position="310"/>
    </location>
</feature>
<feature type="domain" description="ABC transporter" evidence="1">
    <location>
        <begin position="342"/>
        <end position="578"/>
    </location>
</feature>
<feature type="binding site" evidence="1">
    <location>
        <begin position="376"/>
        <end position="383"/>
    </location>
    <ligand>
        <name>ATP</name>
        <dbReference type="ChEBI" id="CHEBI:30616"/>
    </ligand>
</feature>
<sequence>MHNDKDLSTWQTFRRLWPTIAPFKAGLIVAGVALILNAASDTFMLSLLKPLLDDGFGKTDRSVLVWMPLVVIGLMILRGITSYVSSYCISWVSGKVVMTMRRRLFGHMMGMPVSFFDKQSTGTLLSRITYDSEQVASSSSGALITVVREGASIIGLFIMMFYYSWQLSIILIVLAPIVSIAIRVVSKRFRNISKNMQNTMGQVTTSAEQMLKGHKEVLIFGGQEVETKRFDKVSNRMRLQGMKMVSASSISDPIIQLIASLALAFVLYAASFPSVMDSLTAGTITVVFSSMIALMRPLKSLTNVNAQFQRGMAACQTLFTILDSEQEKDEGKRVIERATGDVEFRNVTFTYPGRDVPALRNINLKIPAGKTVALVGRSGSGKSTIASLITRFYDIDEGEILMDGHDLREYTLASLRNQVALVSQNVHLFNDTVANNIAYARTEQYSREQIEEAARMAYAMDFINKMDNGLDTVIGENGVLLSGGQRQRIAIARALLRDSPILILDEATSALDTESERAIQAALDELQKNRTSLVIAHRLSTIEKADEIVVVEDGVIVERGTHNDLLEHRGVYAQLHKMQFGQ</sequence>
<organism>
    <name type="scientific">Shigella dysenteriae serotype 1 (strain Sd197)</name>
    <dbReference type="NCBI Taxonomy" id="300267"/>
    <lineage>
        <taxon>Bacteria</taxon>
        <taxon>Pseudomonadati</taxon>
        <taxon>Pseudomonadota</taxon>
        <taxon>Gammaproteobacteria</taxon>
        <taxon>Enterobacterales</taxon>
        <taxon>Enterobacteriaceae</taxon>
        <taxon>Shigella</taxon>
    </lineage>
</organism>
<reference key="1">
    <citation type="journal article" date="2005" name="Nucleic Acids Res.">
        <title>Genome dynamics and diversity of Shigella species, the etiologic agents of bacillary dysentery.</title>
        <authorList>
            <person name="Yang F."/>
            <person name="Yang J."/>
            <person name="Zhang X."/>
            <person name="Chen L."/>
            <person name="Jiang Y."/>
            <person name="Yan Y."/>
            <person name="Tang X."/>
            <person name="Wang J."/>
            <person name="Xiong Z."/>
            <person name="Dong J."/>
            <person name="Xue Y."/>
            <person name="Zhu Y."/>
            <person name="Xu X."/>
            <person name="Sun L."/>
            <person name="Chen S."/>
            <person name="Nie H."/>
            <person name="Peng J."/>
            <person name="Xu J."/>
            <person name="Wang Y."/>
            <person name="Yuan Z."/>
            <person name="Wen Y."/>
            <person name="Yao Z."/>
            <person name="Shen Y."/>
            <person name="Qiang B."/>
            <person name="Hou Y."/>
            <person name="Yu J."/>
            <person name="Jin Q."/>
        </authorList>
    </citation>
    <scope>NUCLEOTIDE SEQUENCE [LARGE SCALE GENOMIC DNA]</scope>
    <source>
        <strain>Sd197</strain>
    </source>
</reference>
<accession>Q32E34</accession>